<name>ADEC_LACDA</name>
<proteinExistence type="inferred from homology"/>
<reference key="1">
    <citation type="journal article" date="2006" name="Proc. Natl. Acad. Sci. U.S.A.">
        <title>The complete genome sequence of Lactobacillus bulgaricus reveals extensive and ongoing reductive evolution.</title>
        <authorList>
            <person name="van de Guchte M."/>
            <person name="Penaud S."/>
            <person name="Grimaldi C."/>
            <person name="Barbe V."/>
            <person name="Bryson K."/>
            <person name="Nicolas P."/>
            <person name="Robert C."/>
            <person name="Oztas S."/>
            <person name="Mangenot S."/>
            <person name="Couloux A."/>
            <person name="Loux V."/>
            <person name="Dervyn R."/>
            <person name="Bossy R."/>
            <person name="Bolotin A."/>
            <person name="Batto J.-M."/>
            <person name="Walunas T."/>
            <person name="Gibrat J.-F."/>
            <person name="Bessieres P."/>
            <person name="Weissenbach J."/>
            <person name="Ehrlich S.D."/>
            <person name="Maguin E."/>
        </authorList>
    </citation>
    <scope>NUCLEOTIDE SEQUENCE [LARGE SCALE GENOMIC DNA]</scope>
    <source>
        <strain>ATCC 11842 / DSM 20081 / BCRC 10696 / JCM 1002 / NBRC 13953 / NCIMB 11778 / NCTC 12712 / WDCM 00102 / Lb 14</strain>
    </source>
</reference>
<accession>Q1G825</accession>
<protein>
    <recommendedName>
        <fullName evidence="1">Adenine deaminase</fullName>
        <shortName evidence="1">Adenase</shortName>
        <shortName evidence="1">Adenine aminase</shortName>
        <ecNumber evidence="1">3.5.4.2</ecNumber>
    </recommendedName>
</protein>
<gene>
    <name evidence="1" type="primary">ade</name>
    <name type="ordered locus">Ldb2182</name>
</gene>
<feature type="chain" id="PRO_0000292383" description="Adenine deaminase">
    <location>
        <begin position="1"/>
        <end position="565"/>
    </location>
</feature>
<keyword id="KW-0378">Hydrolase</keyword>
<keyword id="KW-0464">Manganese</keyword>
<keyword id="KW-1185">Reference proteome</keyword>
<comment type="catalytic activity">
    <reaction evidence="1">
        <text>adenine + H2O + H(+) = hypoxanthine + NH4(+)</text>
        <dbReference type="Rhea" id="RHEA:23688"/>
        <dbReference type="ChEBI" id="CHEBI:15377"/>
        <dbReference type="ChEBI" id="CHEBI:15378"/>
        <dbReference type="ChEBI" id="CHEBI:16708"/>
        <dbReference type="ChEBI" id="CHEBI:17368"/>
        <dbReference type="ChEBI" id="CHEBI:28938"/>
        <dbReference type="EC" id="3.5.4.2"/>
    </reaction>
</comment>
<comment type="cofactor">
    <cofactor evidence="1">
        <name>Mn(2+)</name>
        <dbReference type="ChEBI" id="CHEBI:29035"/>
    </cofactor>
</comment>
<comment type="similarity">
    <text evidence="1">Belongs to the metallo-dependent hydrolases superfamily. Adenine deaminase family.</text>
</comment>
<organism>
    <name type="scientific">Lactobacillus delbrueckii subsp. bulgaricus (strain ATCC 11842 / DSM 20081 / BCRC 10696 / JCM 1002 / NBRC 13953 / NCIMB 11778 / NCTC 12712 / WDCM 00102 / Lb 14)</name>
    <dbReference type="NCBI Taxonomy" id="390333"/>
    <lineage>
        <taxon>Bacteria</taxon>
        <taxon>Bacillati</taxon>
        <taxon>Bacillota</taxon>
        <taxon>Bacilli</taxon>
        <taxon>Lactobacillales</taxon>
        <taxon>Lactobacillaceae</taxon>
        <taxon>Lactobacillus</taxon>
    </lineage>
</organism>
<dbReference type="EC" id="3.5.4.2" evidence="1"/>
<dbReference type="EMBL" id="CR954253">
    <property type="protein sequence ID" value="CAI98906.1"/>
    <property type="molecule type" value="Genomic_DNA"/>
</dbReference>
<dbReference type="RefSeq" id="WP_003621704.1">
    <property type="nucleotide sequence ID" value="NC_008054.1"/>
</dbReference>
<dbReference type="SMR" id="Q1G825"/>
<dbReference type="STRING" id="390333.Ldb2182"/>
<dbReference type="KEGG" id="ldb:Ldb2182"/>
<dbReference type="eggNOG" id="COG1001">
    <property type="taxonomic scope" value="Bacteria"/>
</dbReference>
<dbReference type="HOGENOM" id="CLU_027935_0_0_9"/>
<dbReference type="BioCyc" id="LDEL390333:LDB_RS09505-MONOMER"/>
<dbReference type="Proteomes" id="UP000001259">
    <property type="component" value="Chromosome"/>
</dbReference>
<dbReference type="GO" id="GO:0000034">
    <property type="term" value="F:adenine deaminase activity"/>
    <property type="evidence" value="ECO:0007669"/>
    <property type="project" value="UniProtKB-UniRule"/>
</dbReference>
<dbReference type="GO" id="GO:0006146">
    <property type="term" value="P:adenine catabolic process"/>
    <property type="evidence" value="ECO:0007669"/>
    <property type="project" value="InterPro"/>
</dbReference>
<dbReference type="Gene3D" id="3.20.20.140">
    <property type="entry name" value="Metal-dependent hydrolases"/>
    <property type="match status" value="1"/>
</dbReference>
<dbReference type="Gene3D" id="2.30.40.10">
    <property type="entry name" value="Urease, subunit C, domain 1"/>
    <property type="match status" value="1"/>
</dbReference>
<dbReference type="HAMAP" id="MF_01518">
    <property type="entry name" value="Adenine_deamin"/>
    <property type="match status" value="1"/>
</dbReference>
<dbReference type="InterPro" id="IPR006679">
    <property type="entry name" value="Adenine_deam"/>
</dbReference>
<dbReference type="InterPro" id="IPR026912">
    <property type="entry name" value="Adenine_deam_C"/>
</dbReference>
<dbReference type="InterPro" id="IPR006680">
    <property type="entry name" value="Amidohydro-rel"/>
</dbReference>
<dbReference type="InterPro" id="IPR011059">
    <property type="entry name" value="Metal-dep_hydrolase_composite"/>
</dbReference>
<dbReference type="InterPro" id="IPR032466">
    <property type="entry name" value="Metal_Hydrolase"/>
</dbReference>
<dbReference type="PANTHER" id="PTHR11113:SF2">
    <property type="entry name" value="ADENINE DEAMINASE"/>
    <property type="match status" value="1"/>
</dbReference>
<dbReference type="PANTHER" id="PTHR11113">
    <property type="entry name" value="N-ACETYLGLUCOSAMINE-6-PHOSPHATE DEACETYLASE"/>
    <property type="match status" value="1"/>
</dbReference>
<dbReference type="Pfam" id="PF13382">
    <property type="entry name" value="Adenine_deam_C"/>
    <property type="match status" value="1"/>
</dbReference>
<dbReference type="Pfam" id="PF01979">
    <property type="entry name" value="Amidohydro_1"/>
    <property type="match status" value="1"/>
</dbReference>
<dbReference type="SUPFAM" id="SSF51338">
    <property type="entry name" value="Composite domain of metallo-dependent hydrolases"/>
    <property type="match status" value="1"/>
</dbReference>
<dbReference type="SUPFAM" id="SSF51556">
    <property type="entry name" value="Metallo-dependent hydrolases"/>
    <property type="match status" value="1"/>
</dbReference>
<evidence type="ECO:0000255" key="1">
    <source>
        <dbReference type="HAMAP-Rule" id="MF_01518"/>
    </source>
</evidence>
<sequence>MTKIDLLVKNAHVFNVYLRKFEDVNITIKDGKFYWINKELPGIEAAKVIDLQGKYVIPGFVDAHMHIDSSMTTPKVMGQTIGKYGTTTIIADDHEITNVAGVKGLKDFIDEKAPIDIFFGIPSSVPSTNPNMETTGGLIGVKETEELLKDPRFVCLGEVMNFKDMTSDHDTLIKKIIAACRKARPTMPLEGHVPAYHSEDLAKVIYAGITTDHTQQTSSLVDEKIRSGMFVEIQLKSMHQEVIDTVIEHGYFEHVALVTDDSMPDTLLKGHLNLLVKKAIDMGMRPEDAIYISTYTPARHMGLWDRGAIAPGRVADFIVLNNLEDLSIAQVYKNGLPFAAKDEKDNNVYPEELLHSVKAPKLSEADFDLKTDLVQNGKVVANIIQINEVGTFTNHIQKCLEVKDGHVQWKKAGLALMLCQERYGKNEGRYAFALIDRGIVGDGAIGATWAHDHHNLIILGTNIAGMVSVQNLLVEEQGGYIAAKGSQIVANAPLPLGGVVSLEPMSVLGKQISKVRETMVDLGYKNTNEIMSFSTLSLLVSPTLKISDKGIFEVKTQRHIPLFEC</sequence>